<organism>
    <name type="scientific">Streptococcus pneumoniae (strain ATCC BAA-255 / R6)</name>
    <dbReference type="NCBI Taxonomy" id="171101"/>
    <lineage>
        <taxon>Bacteria</taxon>
        <taxon>Bacillati</taxon>
        <taxon>Bacillota</taxon>
        <taxon>Bacilli</taxon>
        <taxon>Lactobacillales</taxon>
        <taxon>Streptococcaceae</taxon>
        <taxon>Streptococcus</taxon>
    </lineage>
</organism>
<gene>
    <name evidence="1" type="primary">pyrF</name>
    <name type="ordered locus">spr0613</name>
</gene>
<feature type="chain" id="PRO_0000134588" description="Orotidine 5'-phosphate decarboxylase">
    <location>
        <begin position="1"/>
        <end position="233"/>
    </location>
</feature>
<feature type="active site" description="Proton donor" evidence="1">
    <location>
        <position position="63"/>
    </location>
</feature>
<feature type="binding site" evidence="1">
    <location>
        <position position="11"/>
    </location>
    <ligand>
        <name>substrate</name>
    </ligand>
</feature>
<feature type="binding site" evidence="1">
    <location>
        <position position="34"/>
    </location>
    <ligand>
        <name>substrate</name>
    </ligand>
</feature>
<feature type="binding site" evidence="1">
    <location>
        <begin position="61"/>
        <end position="70"/>
    </location>
    <ligand>
        <name>substrate</name>
    </ligand>
</feature>
<feature type="binding site" evidence="1">
    <location>
        <position position="117"/>
    </location>
    <ligand>
        <name>substrate</name>
    </ligand>
</feature>
<feature type="binding site" evidence="1">
    <location>
        <position position="179"/>
    </location>
    <ligand>
        <name>substrate</name>
    </ligand>
</feature>
<feature type="binding site" evidence="1">
    <location>
        <position position="188"/>
    </location>
    <ligand>
        <name>substrate</name>
    </ligand>
</feature>
<feature type="binding site" evidence="1">
    <location>
        <position position="208"/>
    </location>
    <ligand>
        <name>substrate</name>
    </ligand>
</feature>
<feature type="binding site" evidence="1">
    <location>
        <position position="209"/>
    </location>
    <ligand>
        <name>substrate</name>
    </ligand>
</feature>
<accession>Q8DQL6</accession>
<protein>
    <recommendedName>
        <fullName evidence="1">Orotidine 5'-phosphate decarboxylase</fullName>
        <ecNumber evidence="1">4.1.1.23</ecNumber>
    </recommendedName>
    <alternativeName>
        <fullName evidence="1">OMP decarboxylase</fullName>
        <shortName evidence="1">OMPDCase</shortName>
        <shortName evidence="1">OMPdecase</shortName>
    </alternativeName>
</protein>
<reference key="1">
    <citation type="journal article" date="2001" name="J. Bacteriol.">
        <title>Genome of the bacterium Streptococcus pneumoniae strain R6.</title>
        <authorList>
            <person name="Hoskins J."/>
            <person name="Alborn W.E. Jr."/>
            <person name="Arnold J."/>
            <person name="Blaszczak L.C."/>
            <person name="Burgett S."/>
            <person name="DeHoff B.S."/>
            <person name="Estrem S.T."/>
            <person name="Fritz L."/>
            <person name="Fu D.-J."/>
            <person name="Fuller W."/>
            <person name="Geringer C."/>
            <person name="Gilmour R."/>
            <person name="Glass J.S."/>
            <person name="Khoja H."/>
            <person name="Kraft A.R."/>
            <person name="Lagace R.E."/>
            <person name="LeBlanc D.J."/>
            <person name="Lee L.N."/>
            <person name="Lefkowitz E.J."/>
            <person name="Lu J."/>
            <person name="Matsushima P."/>
            <person name="McAhren S.M."/>
            <person name="McHenney M."/>
            <person name="McLeaster K."/>
            <person name="Mundy C.W."/>
            <person name="Nicas T.I."/>
            <person name="Norris F.H."/>
            <person name="O'Gara M."/>
            <person name="Peery R.B."/>
            <person name="Robertson G.T."/>
            <person name="Rockey P."/>
            <person name="Sun P.-M."/>
            <person name="Winkler M.E."/>
            <person name="Yang Y."/>
            <person name="Young-Bellido M."/>
            <person name="Zhao G."/>
            <person name="Zook C.A."/>
            <person name="Baltz R.H."/>
            <person name="Jaskunas S.R."/>
            <person name="Rosteck P.R. Jr."/>
            <person name="Skatrud P.L."/>
            <person name="Glass J.I."/>
        </authorList>
    </citation>
    <scope>NUCLEOTIDE SEQUENCE [LARGE SCALE GENOMIC DNA]</scope>
    <source>
        <strain>ATCC BAA-255 / R6</strain>
    </source>
</reference>
<dbReference type="EC" id="4.1.1.23" evidence="1"/>
<dbReference type="EMBL" id="AE007317">
    <property type="protein sequence ID" value="AAK99417.1"/>
    <property type="molecule type" value="Genomic_DNA"/>
</dbReference>
<dbReference type="PIR" id="E97948">
    <property type="entry name" value="E97948"/>
</dbReference>
<dbReference type="RefSeq" id="NP_358207.1">
    <property type="nucleotide sequence ID" value="NC_003098.1"/>
</dbReference>
<dbReference type="RefSeq" id="WP_001206713.1">
    <property type="nucleotide sequence ID" value="NC_003098.1"/>
</dbReference>
<dbReference type="SMR" id="Q8DQL6"/>
<dbReference type="STRING" id="171101.spr0613"/>
<dbReference type="KEGG" id="spr:spr0613"/>
<dbReference type="PATRIC" id="fig|171101.6.peg.681"/>
<dbReference type="eggNOG" id="COG0284">
    <property type="taxonomic scope" value="Bacteria"/>
</dbReference>
<dbReference type="HOGENOM" id="CLU_067069_1_1_9"/>
<dbReference type="UniPathway" id="UPA00070">
    <property type="reaction ID" value="UER00120"/>
</dbReference>
<dbReference type="Proteomes" id="UP000000586">
    <property type="component" value="Chromosome"/>
</dbReference>
<dbReference type="GO" id="GO:0005829">
    <property type="term" value="C:cytosol"/>
    <property type="evidence" value="ECO:0000318"/>
    <property type="project" value="GO_Central"/>
</dbReference>
<dbReference type="GO" id="GO:0004590">
    <property type="term" value="F:orotidine-5'-phosphate decarboxylase activity"/>
    <property type="evidence" value="ECO:0000318"/>
    <property type="project" value="GO_Central"/>
</dbReference>
<dbReference type="GO" id="GO:0006207">
    <property type="term" value="P:'de novo' pyrimidine nucleobase biosynthetic process"/>
    <property type="evidence" value="ECO:0000318"/>
    <property type="project" value="GO_Central"/>
</dbReference>
<dbReference type="GO" id="GO:0044205">
    <property type="term" value="P:'de novo' UMP biosynthetic process"/>
    <property type="evidence" value="ECO:0007669"/>
    <property type="project" value="UniProtKB-UniRule"/>
</dbReference>
<dbReference type="CDD" id="cd04725">
    <property type="entry name" value="OMP_decarboxylase_like"/>
    <property type="match status" value="1"/>
</dbReference>
<dbReference type="FunFam" id="3.20.20.70:FF:000015">
    <property type="entry name" value="Orotidine 5'-phosphate decarboxylase"/>
    <property type="match status" value="1"/>
</dbReference>
<dbReference type="Gene3D" id="3.20.20.70">
    <property type="entry name" value="Aldolase class I"/>
    <property type="match status" value="1"/>
</dbReference>
<dbReference type="HAMAP" id="MF_01200_B">
    <property type="entry name" value="OMPdecase_type1_B"/>
    <property type="match status" value="1"/>
</dbReference>
<dbReference type="InterPro" id="IPR013785">
    <property type="entry name" value="Aldolase_TIM"/>
</dbReference>
<dbReference type="InterPro" id="IPR014732">
    <property type="entry name" value="OMPdecase"/>
</dbReference>
<dbReference type="InterPro" id="IPR018089">
    <property type="entry name" value="OMPdecase_AS"/>
</dbReference>
<dbReference type="InterPro" id="IPR047596">
    <property type="entry name" value="OMPdecase_bac"/>
</dbReference>
<dbReference type="InterPro" id="IPR001754">
    <property type="entry name" value="OMPdeCOase_dom"/>
</dbReference>
<dbReference type="InterPro" id="IPR011060">
    <property type="entry name" value="RibuloseP-bd_barrel"/>
</dbReference>
<dbReference type="NCBIfam" id="NF001273">
    <property type="entry name" value="PRK00230.1"/>
    <property type="match status" value="1"/>
</dbReference>
<dbReference type="NCBIfam" id="TIGR01740">
    <property type="entry name" value="pyrF"/>
    <property type="match status" value="1"/>
</dbReference>
<dbReference type="PANTHER" id="PTHR32119">
    <property type="entry name" value="OROTIDINE 5'-PHOSPHATE DECARBOXYLASE"/>
    <property type="match status" value="1"/>
</dbReference>
<dbReference type="PANTHER" id="PTHR32119:SF2">
    <property type="entry name" value="OROTIDINE 5'-PHOSPHATE DECARBOXYLASE"/>
    <property type="match status" value="1"/>
</dbReference>
<dbReference type="Pfam" id="PF00215">
    <property type="entry name" value="OMPdecase"/>
    <property type="match status" value="1"/>
</dbReference>
<dbReference type="SMART" id="SM00934">
    <property type="entry name" value="OMPdecase"/>
    <property type="match status" value="1"/>
</dbReference>
<dbReference type="SUPFAM" id="SSF51366">
    <property type="entry name" value="Ribulose-phoshate binding barrel"/>
    <property type="match status" value="1"/>
</dbReference>
<dbReference type="PROSITE" id="PS00156">
    <property type="entry name" value="OMPDECASE"/>
    <property type="match status" value="1"/>
</dbReference>
<proteinExistence type="inferred from homology"/>
<sequence>MREHRPIIALDFPSFEAVKEFLALFPAEESLYLKVGMELYYAAGPEIVSYLKGLGHSVFLDLKLHDIPNTVKSAMKILSQLGVDMTNVHAAGGVEMMKAAREGLGSQAKLIAVTQLTSTSEAQMQEFQNIQTSLQESVIHYAKKTAEAGLDGVVCSAQEVQVIKQATNPDFICLTPGIRPAGVAVGDQKRVMTPADAYQIGSDYIVVGRPITQAEEPVAAYHAIKDEWTQDWN</sequence>
<keyword id="KW-0210">Decarboxylase</keyword>
<keyword id="KW-0456">Lyase</keyword>
<keyword id="KW-0665">Pyrimidine biosynthesis</keyword>
<keyword id="KW-1185">Reference proteome</keyword>
<name>PYRF_STRR6</name>
<evidence type="ECO:0000255" key="1">
    <source>
        <dbReference type="HAMAP-Rule" id="MF_01200"/>
    </source>
</evidence>
<comment type="function">
    <text evidence="1">Catalyzes the decarboxylation of orotidine 5'-monophosphate (OMP) to uridine 5'-monophosphate (UMP).</text>
</comment>
<comment type="catalytic activity">
    <reaction evidence="1">
        <text>orotidine 5'-phosphate + H(+) = UMP + CO2</text>
        <dbReference type="Rhea" id="RHEA:11596"/>
        <dbReference type="ChEBI" id="CHEBI:15378"/>
        <dbReference type="ChEBI" id="CHEBI:16526"/>
        <dbReference type="ChEBI" id="CHEBI:57538"/>
        <dbReference type="ChEBI" id="CHEBI:57865"/>
        <dbReference type="EC" id="4.1.1.23"/>
    </reaction>
</comment>
<comment type="pathway">
    <text evidence="1">Pyrimidine metabolism; UMP biosynthesis via de novo pathway; UMP from orotate: step 2/2.</text>
</comment>
<comment type="subunit">
    <text evidence="1">Homodimer.</text>
</comment>
<comment type="similarity">
    <text evidence="1">Belongs to the OMP decarboxylase family. Type 1 subfamily.</text>
</comment>